<accession>Q9SKC9</accession>
<accession>Q42155</accession>
<accession>Q42220</accession>
<accession>Q8GXZ6</accession>
<protein>
    <recommendedName>
        <fullName>NADH dehydrogenase [ubiquinone] 1 beta subcomplex subunit 7</fullName>
    </recommendedName>
</protein>
<feature type="chain" id="PRO_0000410997" description="NADH dehydrogenase [ubiquinone] 1 beta subcomplex subunit 7">
    <location>
        <begin position="1"/>
        <end position="103"/>
    </location>
</feature>
<feature type="domain" description="CHCH" evidence="2">
    <location>
        <begin position="27"/>
        <end position="69"/>
    </location>
</feature>
<feature type="short sequence motif" description="Cx9C motif 1" evidence="2">
    <location>
        <begin position="30"/>
        <end position="40"/>
    </location>
</feature>
<feature type="short sequence motif" description="Cx9C motif 2" evidence="2">
    <location>
        <begin position="51"/>
        <end position="61"/>
    </location>
</feature>
<feature type="disulfide bond" evidence="2">
    <location>
        <begin position="30"/>
        <end position="61"/>
    </location>
</feature>
<feature type="disulfide bond" evidence="2">
    <location>
        <begin position="40"/>
        <end position="51"/>
    </location>
</feature>
<feature type="sequence conflict" description="In Ref. 4; BAC42587." evidence="3" ref="4">
    <original>E</original>
    <variation>G</variation>
    <location>
        <position position="59"/>
    </location>
</feature>
<feature type="sequence conflict" description="In Ref. 3; CAA81562/CAA82811." evidence="3" ref="3">
    <original>R</original>
    <variation>K</variation>
    <location>
        <position position="69"/>
    </location>
</feature>
<feature type="sequence conflict" description="In Ref. 4; BAC42587." evidence="3" ref="4">
    <original>T</original>
    <variation>A</variation>
    <location>
        <position position="100"/>
    </location>
</feature>
<feature type="helix" evidence="5">
    <location>
        <begin position="14"/>
        <end position="19"/>
    </location>
</feature>
<feature type="helix" evidence="5">
    <location>
        <begin position="24"/>
        <end position="26"/>
    </location>
</feature>
<feature type="helix" evidence="5">
    <location>
        <begin position="31"/>
        <end position="43"/>
    </location>
</feature>
<feature type="turn" evidence="5">
    <location>
        <begin position="44"/>
        <end position="46"/>
    </location>
</feature>
<feature type="turn" evidence="4">
    <location>
        <begin position="48"/>
        <end position="50"/>
    </location>
</feature>
<feature type="helix" evidence="5">
    <location>
        <begin position="52"/>
        <end position="86"/>
    </location>
</feature>
<evidence type="ECO:0000250" key="1"/>
<evidence type="ECO:0000255" key="2">
    <source>
        <dbReference type="PROSITE-ProRule" id="PRU01150"/>
    </source>
</evidence>
<evidence type="ECO:0000305" key="3"/>
<evidence type="ECO:0007829" key="4">
    <source>
        <dbReference type="PDB" id="7AQW"/>
    </source>
</evidence>
<evidence type="ECO:0007829" key="5">
    <source>
        <dbReference type="PDB" id="8BEH"/>
    </source>
</evidence>
<gene>
    <name type="ordered locus">At2g02050</name>
    <name type="ORF">F14H20.12</name>
</gene>
<name>NDUB7_ARATH</name>
<keyword id="KW-0002">3D-structure</keyword>
<keyword id="KW-1015">Disulfide bond</keyword>
<keyword id="KW-0249">Electron transport</keyword>
<keyword id="KW-0472">Membrane</keyword>
<keyword id="KW-0496">Mitochondrion</keyword>
<keyword id="KW-0999">Mitochondrion inner membrane</keyword>
<keyword id="KW-1185">Reference proteome</keyword>
<keyword id="KW-0677">Repeat</keyword>
<keyword id="KW-0679">Respiratory chain</keyword>
<keyword id="KW-0813">Transport</keyword>
<reference key="1">
    <citation type="journal article" date="1999" name="Nature">
        <title>Sequence and analysis of chromosome 2 of the plant Arabidopsis thaliana.</title>
        <authorList>
            <person name="Lin X."/>
            <person name="Kaul S."/>
            <person name="Rounsley S.D."/>
            <person name="Shea T.P."/>
            <person name="Benito M.-I."/>
            <person name="Town C.D."/>
            <person name="Fujii C.Y."/>
            <person name="Mason T.M."/>
            <person name="Bowman C.L."/>
            <person name="Barnstead M.E."/>
            <person name="Feldblyum T.V."/>
            <person name="Buell C.R."/>
            <person name="Ketchum K.A."/>
            <person name="Lee J.J."/>
            <person name="Ronning C.M."/>
            <person name="Koo H.L."/>
            <person name="Moffat K.S."/>
            <person name="Cronin L.A."/>
            <person name="Shen M."/>
            <person name="Pai G."/>
            <person name="Van Aken S."/>
            <person name="Umayam L."/>
            <person name="Tallon L.J."/>
            <person name="Gill J.E."/>
            <person name="Adams M.D."/>
            <person name="Carrera A.J."/>
            <person name="Creasy T.H."/>
            <person name="Goodman H.M."/>
            <person name="Somerville C.R."/>
            <person name="Copenhaver G.P."/>
            <person name="Preuss D."/>
            <person name="Nierman W.C."/>
            <person name="White O."/>
            <person name="Eisen J.A."/>
            <person name="Salzberg S.L."/>
            <person name="Fraser C.M."/>
            <person name="Venter J.C."/>
        </authorList>
    </citation>
    <scope>NUCLEOTIDE SEQUENCE [LARGE SCALE GENOMIC DNA]</scope>
    <source>
        <strain>cv. Columbia</strain>
    </source>
</reference>
<reference key="2">
    <citation type="journal article" date="2017" name="Plant J.">
        <title>Araport11: a complete reannotation of the Arabidopsis thaliana reference genome.</title>
        <authorList>
            <person name="Cheng C.Y."/>
            <person name="Krishnakumar V."/>
            <person name="Chan A.P."/>
            <person name="Thibaud-Nissen F."/>
            <person name="Schobel S."/>
            <person name="Town C.D."/>
        </authorList>
    </citation>
    <scope>GENOME REANNOTATION</scope>
    <source>
        <strain>cv. Columbia</strain>
    </source>
</reference>
<reference key="3">
    <citation type="submission" date="1994-02" db="EMBL/GenBank/DDBJ databases">
        <title>The Arabidopsis thaliana transcribed genome: the GDR cDNA program.</title>
        <authorList>
            <person name="Raynal M."/>
            <person name="Grellet F."/>
            <person name="Laudie M."/>
            <person name="Meyer Y."/>
            <person name="Cooke R."/>
            <person name="Delseny M."/>
        </authorList>
    </citation>
    <scope>NUCLEOTIDE SEQUENCE [LARGE SCALE MRNA]</scope>
    <source>
        <strain>cv. Columbia</strain>
        <tissue>Dry seed</tissue>
    </source>
</reference>
<reference key="4">
    <citation type="journal article" date="2002" name="Science">
        <title>Functional annotation of a full-length Arabidopsis cDNA collection.</title>
        <authorList>
            <person name="Seki M."/>
            <person name="Narusaka M."/>
            <person name="Kamiya A."/>
            <person name="Ishida J."/>
            <person name="Satou M."/>
            <person name="Sakurai T."/>
            <person name="Nakajima M."/>
            <person name="Enju A."/>
            <person name="Akiyama K."/>
            <person name="Oono Y."/>
            <person name="Muramatsu M."/>
            <person name="Hayashizaki Y."/>
            <person name="Kawai J."/>
            <person name="Carninci P."/>
            <person name="Itoh M."/>
            <person name="Ishii Y."/>
            <person name="Arakawa T."/>
            <person name="Shibata K."/>
            <person name="Shinagawa A."/>
            <person name="Shinozaki K."/>
        </authorList>
    </citation>
    <scope>NUCLEOTIDE SEQUENCE [LARGE SCALE MRNA]</scope>
    <source>
        <strain>cv. Columbia</strain>
    </source>
</reference>
<reference key="5">
    <citation type="journal article" date="2003" name="Science">
        <title>Empirical analysis of transcriptional activity in the Arabidopsis genome.</title>
        <authorList>
            <person name="Yamada K."/>
            <person name="Lim J."/>
            <person name="Dale J.M."/>
            <person name="Chen H."/>
            <person name="Shinn P."/>
            <person name="Palm C.J."/>
            <person name="Southwick A.M."/>
            <person name="Wu H.C."/>
            <person name="Kim C.J."/>
            <person name="Nguyen M."/>
            <person name="Pham P.K."/>
            <person name="Cheuk R.F."/>
            <person name="Karlin-Newmann G."/>
            <person name="Liu S.X."/>
            <person name="Lam B."/>
            <person name="Sakano H."/>
            <person name="Wu T."/>
            <person name="Yu G."/>
            <person name="Miranda M."/>
            <person name="Quach H.L."/>
            <person name="Tripp M."/>
            <person name="Chang C.H."/>
            <person name="Lee J.M."/>
            <person name="Toriumi M.J."/>
            <person name="Chan M.M."/>
            <person name="Tang C.C."/>
            <person name="Onodera C.S."/>
            <person name="Deng J.M."/>
            <person name="Akiyama K."/>
            <person name="Ansari Y."/>
            <person name="Arakawa T."/>
            <person name="Banh J."/>
            <person name="Banno F."/>
            <person name="Bowser L."/>
            <person name="Brooks S.Y."/>
            <person name="Carninci P."/>
            <person name="Chao Q."/>
            <person name="Choy N."/>
            <person name="Enju A."/>
            <person name="Goldsmith A.D."/>
            <person name="Gurjal M."/>
            <person name="Hansen N.F."/>
            <person name="Hayashizaki Y."/>
            <person name="Johnson-Hopson C."/>
            <person name="Hsuan V.W."/>
            <person name="Iida K."/>
            <person name="Karnes M."/>
            <person name="Khan S."/>
            <person name="Koesema E."/>
            <person name="Ishida J."/>
            <person name="Jiang P.X."/>
            <person name="Jones T."/>
            <person name="Kawai J."/>
            <person name="Kamiya A."/>
            <person name="Meyers C."/>
            <person name="Nakajima M."/>
            <person name="Narusaka M."/>
            <person name="Seki M."/>
            <person name="Sakurai T."/>
            <person name="Satou M."/>
            <person name="Tamse R."/>
            <person name="Vaysberg M."/>
            <person name="Wallender E.K."/>
            <person name="Wong C."/>
            <person name="Yamamura Y."/>
            <person name="Yuan S."/>
            <person name="Shinozaki K."/>
            <person name="Davis R.W."/>
            <person name="Theologis A."/>
            <person name="Ecker J.R."/>
        </authorList>
    </citation>
    <scope>NUCLEOTIDE SEQUENCE [LARGE SCALE MRNA]</scope>
    <source>
        <strain>cv. Columbia</strain>
    </source>
</reference>
<reference key="6">
    <citation type="submission" date="2002-03" db="EMBL/GenBank/DDBJ databases">
        <title>Full-length cDNA from Arabidopsis thaliana.</title>
        <authorList>
            <person name="Brover V.V."/>
            <person name="Troukhan M.E."/>
            <person name="Alexandrov N.A."/>
            <person name="Lu Y.-P."/>
            <person name="Flavell R.B."/>
            <person name="Feldmann K.A."/>
        </authorList>
    </citation>
    <scope>NUCLEOTIDE SEQUENCE [LARGE SCALE MRNA]</scope>
</reference>
<proteinExistence type="evidence at protein level"/>
<sequence length="103" mass="11740">MEVPGSSKKMIATQEEMSAAKIALGSRDMCAHLLIPLNKCRQAEFYLPWKCEDERHVYEKCEYELVMERMLAMKKIREEEALAKQNKLQGNAAVPLIPKTANA</sequence>
<dbReference type="EMBL" id="AC006532">
    <property type="protein sequence ID" value="AAD20097.1"/>
    <property type="molecule type" value="Genomic_DNA"/>
</dbReference>
<dbReference type="EMBL" id="CP002685">
    <property type="protein sequence ID" value="AEC05539.1"/>
    <property type="molecule type" value="Genomic_DNA"/>
</dbReference>
<dbReference type="EMBL" id="Z27010">
    <property type="protein sequence ID" value="CAA81562.1"/>
    <property type="molecule type" value="mRNA"/>
</dbReference>
<dbReference type="EMBL" id="Z29839">
    <property type="protein sequence ID" value="CAA82811.1"/>
    <property type="molecule type" value="mRNA"/>
</dbReference>
<dbReference type="EMBL" id="AK117949">
    <property type="protein sequence ID" value="BAC42587.1"/>
    <property type="molecule type" value="mRNA"/>
</dbReference>
<dbReference type="EMBL" id="AF324660">
    <property type="protein sequence ID" value="AAG40011.1"/>
    <property type="molecule type" value="mRNA"/>
</dbReference>
<dbReference type="EMBL" id="AF326908">
    <property type="protein sequence ID" value="AAG41490.1"/>
    <property type="molecule type" value="mRNA"/>
</dbReference>
<dbReference type="EMBL" id="AF339726">
    <property type="protein sequence ID" value="AAK00408.1"/>
    <property type="molecule type" value="mRNA"/>
</dbReference>
<dbReference type="EMBL" id="AY052268">
    <property type="protein sequence ID" value="AAK97738.1"/>
    <property type="molecule type" value="mRNA"/>
</dbReference>
<dbReference type="EMBL" id="AY143799">
    <property type="protein sequence ID" value="AAN28738.1"/>
    <property type="molecule type" value="mRNA"/>
</dbReference>
<dbReference type="EMBL" id="AY087888">
    <property type="protein sequence ID" value="AAM65440.1"/>
    <property type="molecule type" value="mRNA"/>
</dbReference>
<dbReference type="PIR" id="D84432">
    <property type="entry name" value="D84432"/>
</dbReference>
<dbReference type="RefSeq" id="NP_565280.1">
    <property type="nucleotide sequence ID" value="NM_126266.5"/>
</dbReference>
<dbReference type="PDB" id="7A23">
    <property type="method" value="EM"/>
    <property type="resolution" value="3.70 A"/>
    <property type="chains" value="b=1-103"/>
</dbReference>
<dbReference type="PDB" id="7AQW">
    <property type="method" value="EM"/>
    <property type="resolution" value="3.17 A"/>
    <property type="chains" value="o=1-103"/>
</dbReference>
<dbReference type="PDB" id="7AR7">
    <property type="method" value="EM"/>
    <property type="resolution" value="3.72 A"/>
    <property type="chains" value="o=8-87"/>
</dbReference>
<dbReference type="PDB" id="7AR8">
    <property type="method" value="EM"/>
    <property type="resolution" value="3.53 A"/>
    <property type="chains" value="o=1-103"/>
</dbReference>
<dbReference type="PDB" id="7ARB">
    <property type="method" value="EM"/>
    <property type="resolution" value="3.41 A"/>
    <property type="chains" value="o=1-103"/>
</dbReference>
<dbReference type="PDB" id="8BEH">
    <property type="method" value="EM"/>
    <property type="resolution" value="2.29 A"/>
    <property type="chains" value="o=1-103"/>
</dbReference>
<dbReference type="PDB" id="8BPX">
    <property type="method" value="EM"/>
    <property type="resolution" value="2.09 A"/>
    <property type="chains" value="o=1-103"/>
</dbReference>
<dbReference type="PDB" id="8BQ5">
    <property type="method" value="EM"/>
    <property type="resolution" value="2.73 A"/>
    <property type="chains" value="o=1-103"/>
</dbReference>
<dbReference type="PDB" id="8BQ6">
    <property type="method" value="EM"/>
    <property type="resolution" value="2.80 A"/>
    <property type="chains" value="o=1-103"/>
</dbReference>
<dbReference type="PDBsum" id="7A23"/>
<dbReference type="PDBsum" id="7AQW"/>
<dbReference type="PDBsum" id="7AR7"/>
<dbReference type="PDBsum" id="7AR8"/>
<dbReference type="PDBsum" id="7ARB"/>
<dbReference type="PDBsum" id="8BEH"/>
<dbReference type="PDBsum" id="8BPX"/>
<dbReference type="PDBsum" id="8BQ5"/>
<dbReference type="PDBsum" id="8BQ6"/>
<dbReference type="EMDB" id="EMD-11874"/>
<dbReference type="EMDB" id="EMD-11875"/>
<dbReference type="EMDB" id="EMD-11876"/>
<dbReference type="EMDB" id="EMD-11878"/>
<dbReference type="EMDB" id="EMD-16003"/>
<dbReference type="EMDB" id="EMD-16168"/>
<dbReference type="EMDB" id="EMD-16171"/>
<dbReference type="EMDB" id="EMD-16172"/>
<dbReference type="SMR" id="Q9SKC9"/>
<dbReference type="BioGRID" id="139">
    <property type="interactions" value="1"/>
</dbReference>
<dbReference type="FunCoup" id="Q9SKC9">
    <property type="interactions" value="3892"/>
</dbReference>
<dbReference type="IntAct" id="Q9SKC9">
    <property type="interactions" value="4"/>
</dbReference>
<dbReference type="STRING" id="3702.Q9SKC9"/>
<dbReference type="TCDB" id="3.D.1.6.3">
    <property type="family name" value="the h+ or na+-translocating nadh dehydrogenase (ndh) family"/>
</dbReference>
<dbReference type="MetOSite" id="Q9SKC9"/>
<dbReference type="PaxDb" id="3702-AT2G02050.1"/>
<dbReference type="ProteomicsDB" id="251169"/>
<dbReference type="EnsemblPlants" id="AT2G02050.1">
    <property type="protein sequence ID" value="AT2G02050.1"/>
    <property type="gene ID" value="AT2G02050"/>
</dbReference>
<dbReference type="GeneID" id="814736"/>
<dbReference type="Gramene" id="AT2G02050.1">
    <property type="protein sequence ID" value="AT2G02050.1"/>
    <property type="gene ID" value="AT2G02050"/>
</dbReference>
<dbReference type="KEGG" id="ath:AT2G02050"/>
<dbReference type="Araport" id="AT2G02050"/>
<dbReference type="TAIR" id="AT2G02050"/>
<dbReference type="eggNOG" id="KOG3468">
    <property type="taxonomic scope" value="Eukaryota"/>
</dbReference>
<dbReference type="HOGENOM" id="CLU_154847_0_0_1"/>
<dbReference type="InParanoid" id="Q9SKC9"/>
<dbReference type="OMA" id="YRDSCAN"/>
<dbReference type="OrthoDB" id="1034384at2759"/>
<dbReference type="PhylomeDB" id="Q9SKC9"/>
<dbReference type="BioCyc" id="ARA:AT2G02050-MONOMER"/>
<dbReference type="BioCyc" id="MetaCyc:AT2G02050-MONOMER"/>
<dbReference type="CD-CODE" id="4299E36E">
    <property type="entry name" value="Nucleolus"/>
</dbReference>
<dbReference type="PRO" id="PR:Q9SKC9"/>
<dbReference type="Proteomes" id="UP000006548">
    <property type="component" value="Chromosome 2"/>
</dbReference>
<dbReference type="ExpressionAtlas" id="Q9SKC9">
    <property type="expression patterns" value="baseline and differential"/>
</dbReference>
<dbReference type="GO" id="GO:0005743">
    <property type="term" value="C:mitochondrial inner membrane"/>
    <property type="evidence" value="ECO:0007669"/>
    <property type="project" value="UniProtKB-SubCell"/>
</dbReference>
<dbReference type="GO" id="GO:0005758">
    <property type="term" value="C:mitochondrial intermembrane space"/>
    <property type="evidence" value="ECO:0007669"/>
    <property type="project" value="UniProtKB-SubCell"/>
</dbReference>
<dbReference type="GO" id="GO:0031966">
    <property type="term" value="C:mitochondrial membrane"/>
    <property type="evidence" value="ECO:0000314"/>
    <property type="project" value="TAIR"/>
</dbReference>
<dbReference type="GO" id="GO:0005739">
    <property type="term" value="C:mitochondrion"/>
    <property type="evidence" value="ECO:0000314"/>
    <property type="project" value="TAIR"/>
</dbReference>
<dbReference type="GO" id="GO:0045271">
    <property type="term" value="C:respiratory chain complex I"/>
    <property type="evidence" value="ECO:0000314"/>
    <property type="project" value="TAIR"/>
</dbReference>
<dbReference type="GO" id="GO:0009853">
    <property type="term" value="P:photorespiration"/>
    <property type="evidence" value="ECO:0000304"/>
    <property type="project" value="TAIR"/>
</dbReference>
<dbReference type="InterPro" id="IPR008698">
    <property type="entry name" value="NDUB7"/>
</dbReference>
<dbReference type="PANTHER" id="PTHR20900:SF0">
    <property type="entry name" value="NADH DEHYDROGENASE [UBIQUINONE] 1 BETA SUBCOMPLEX SUBUNIT 7"/>
    <property type="match status" value="1"/>
</dbReference>
<dbReference type="PANTHER" id="PTHR20900">
    <property type="entry name" value="NADH:UBIQUINONE OXIDOREDUCTASE B18-LIKE SUBUNIT"/>
    <property type="match status" value="1"/>
</dbReference>
<dbReference type="Pfam" id="PF05676">
    <property type="entry name" value="NDUF_B7"/>
    <property type="match status" value="1"/>
</dbReference>
<dbReference type="PROSITE" id="PS51808">
    <property type="entry name" value="CHCH"/>
    <property type="match status" value="1"/>
</dbReference>
<comment type="function">
    <text evidence="1">Accessory subunit of the mitochondrial membrane respiratory chain NADH dehydrogenase (Complex I), that is believed not to be involved in catalysis. Complex I functions in the transfer of electrons from NADH to the respiratory chain. The immediate electron acceptor for the enzyme is believed to be ubiquinone (By similarity).</text>
</comment>
<comment type="subunit">
    <text>Complex I is composed of at least 49 different subunits.</text>
</comment>
<comment type="subcellular location">
    <subcellularLocation>
        <location evidence="1">Mitochondrion</location>
    </subcellularLocation>
    <subcellularLocation>
        <location evidence="1">Mitochondrion inner membrane</location>
        <topology evidence="1">Peripheral membrane protein</topology>
    </subcellularLocation>
    <subcellularLocation>
        <location evidence="1">Mitochondrion intermembrane space</location>
    </subcellularLocation>
</comment>
<comment type="domain">
    <text evidence="1">Contains two C-X9-C motifs that are predicted to form a helix-coil-helix structure, permitting the formation of intramolecular disulfide bonds.</text>
</comment>
<comment type="similarity">
    <text evidence="3">Belongs to the complex I NDUFB7 subunit family.</text>
</comment>
<organism>
    <name type="scientific">Arabidopsis thaliana</name>
    <name type="common">Mouse-ear cress</name>
    <dbReference type="NCBI Taxonomy" id="3702"/>
    <lineage>
        <taxon>Eukaryota</taxon>
        <taxon>Viridiplantae</taxon>
        <taxon>Streptophyta</taxon>
        <taxon>Embryophyta</taxon>
        <taxon>Tracheophyta</taxon>
        <taxon>Spermatophyta</taxon>
        <taxon>Magnoliopsida</taxon>
        <taxon>eudicotyledons</taxon>
        <taxon>Gunneridae</taxon>
        <taxon>Pentapetalae</taxon>
        <taxon>rosids</taxon>
        <taxon>malvids</taxon>
        <taxon>Brassicales</taxon>
        <taxon>Brassicaceae</taxon>
        <taxon>Camelineae</taxon>
        <taxon>Arabidopsis</taxon>
    </lineage>
</organism>